<evidence type="ECO:0000250" key="1"/>
<evidence type="ECO:0000250" key="2">
    <source>
        <dbReference type="UniProtKB" id="P80293"/>
    </source>
</evidence>
<evidence type="ECO:0000305" key="3"/>
<feature type="chain" id="PRO_0000160069" description="Superoxide dismutase [Mn/Fe] 2">
    <location>
        <begin position="1"/>
        <end position="199"/>
    </location>
</feature>
<feature type="binding site" evidence="2">
    <location>
        <position position="27"/>
    </location>
    <ligand>
        <name>Fe(3+)</name>
        <dbReference type="ChEBI" id="CHEBI:29034"/>
    </ligand>
</feature>
<feature type="binding site" evidence="2">
    <location>
        <position position="27"/>
    </location>
    <ligand>
        <name>Mn(2+)</name>
        <dbReference type="ChEBI" id="CHEBI:29035"/>
    </ligand>
</feature>
<feature type="binding site" evidence="2">
    <location>
        <position position="81"/>
    </location>
    <ligand>
        <name>Fe(3+)</name>
        <dbReference type="ChEBI" id="CHEBI:29034"/>
    </ligand>
</feature>
<feature type="binding site" evidence="2">
    <location>
        <position position="81"/>
    </location>
    <ligand>
        <name>Mn(2+)</name>
        <dbReference type="ChEBI" id="CHEBI:29035"/>
    </ligand>
</feature>
<feature type="binding site" evidence="2">
    <location>
        <position position="161"/>
    </location>
    <ligand>
        <name>Fe(3+)</name>
        <dbReference type="ChEBI" id="CHEBI:29034"/>
    </ligand>
</feature>
<feature type="binding site" evidence="2">
    <location>
        <position position="161"/>
    </location>
    <ligand>
        <name>Mn(2+)</name>
        <dbReference type="ChEBI" id="CHEBI:29035"/>
    </ligand>
</feature>
<feature type="binding site" evidence="2">
    <location>
        <position position="165"/>
    </location>
    <ligand>
        <name>Fe(3+)</name>
        <dbReference type="ChEBI" id="CHEBI:29034"/>
    </ligand>
</feature>
<feature type="binding site" evidence="2">
    <location>
        <position position="165"/>
    </location>
    <ligand>
        <name>Mn(2+)</name>
        <dbReference type="ChEBI" id="CHEBI:29035"/>
    </ligand>
</feature>
<keyword id="KW-0408">Iron</keyword>
<keyword id="KW-0464">Manganese</keyword>
<keyword id="KW-0479">Metal-binding</keyword>
<keyword id="KW-0560">Oxidoreductase</keyword>
<reference key="1">
    <citation type="journal article" date="2005" name="J. Bacteriol.">
        <title>Insights on evolution of virulence and resistance from the complete genome analysis of an early methicillin-resistant Staphylococcus aureus strain and a biofilm-producing methicillin-resistant Staphylococcus epidermidis strain.</title>
        <authorList>
            <person name="Gill S.R."/>
            <person name="Fouts D.E."/>
            <person name="Archer G.L."/>
            <person name="Mongodin E.F."/>
            <person name="DeBoy R.T."/>
            <person name="Ravel J."/>
            <person name="Paulsen I.T."/>
            <person name="Kolonay J.F."/>
            <person name="Brinkac L.M."/>
            <person name="Beanan M.J."/>
            <person name="Dodson R.J."/>
            <person name="Daugherty S.C."/>
            <person name="Madupu R."/>
            <person name="Angiuoli S.V."/>
            <person name="Durkin A.S."/>
            <person name="Haft D.H."/>
            <person name="Vamathevan J.J."/>
            <person name="Khouri H."/>
            <person name="Utterback T.R."/>
            <person name="Lee C."/>
            <person name="Dimitrov G."/>
            <person name="Jiang L."/>
            <person name="Qin H."/>
            <person name="Weidman J."/>
            <person name="Tran K."/>
            <person name="Kang K.H."/>
            <person name="Hance I.R."/>
            <person name="Nelson K.E."/>
            <person name="Fraser C.M."/>
        </authorList>
    </citation>
    <scope>NUCLEOTIDE SEQUENCE [LARGE SCALE GENOMIC DNA]</scope>
    <source>
        <strain>COL</strain>
    </source>
</reference>
<accession>Q5HJN5</accession>
<proteinExistence type="inferred from homology"/>
<organism>
    <name type="scientific">Staphylococcus aureus (strain COL)</name>
    <dbReference type="NCBI Taxonomy" id="93062"/>
    <lineage>
        <taxon>Bacteria</taxon>
        <taxon>Bacillati</taxon>
        <taxon>Bacillota</taxon>
        <taxon>Bacilli</taxon>
        <taxon>Bacillales</taxon>
        <taxon>Staphylococcaceae</taxon>
        <taxon>Staphylococcus</taxon>
    </lineage>
</organism>
<gene>
    <name type="primary">sodM</name>
    <name type="ordered locus">SACOL0118</name>
</gene>
<comment type="function">
    <text evidence="2">Destroys superoxide anion radicals which are normally produced within the cells and which are toxic to biological systems. Catalyzes the dismutation of superoxide anion radicals into O2 and H2O2 by successive reduction and oxidation of the transition metal ion at the active site.</text>
</comment>
<comment type="catalytic activity">
    <reaction evidence="2">
        <text>2 superoxide + 2 H(+) = H2O2 + O2</text>
        <dbReference type="Rhea" id="RHEA:20696"/>
        <dbReference type="ChEBI" id="CHEBI:15378"/>
        <dbReference type="ChEBI" id="CHEBI:15379"/>
        <dbReference type="ChEBI" id="CHEBI:16240"/>
        <dbReference type="ChEBI" id="CHEBI:18421"/>
        <dbReference type="EC" id="1.15.1.1"/>
    </reaction>
    <physiologicalReaction direction="left-to-right" evidence="2">
        <dbReference type="Rhea" id="RHEA:20697"/>
    </physiologicalReaction>
</comment>
<comment type="cofactor">
    <cofactor evidence="2">
        <name>Mn(2+)</name>
        <dbReference type="ChEBI" id="CHEBI:29035"/>
    </cofactor>
    <cofactor evidence="2">
        <name>Fe(3+)</name>
        <dbReference type="ChEBI" id="CHEBI:29034"/>
    </cofactor>
    <text evidence="2">Binds 1 Mn(2+) or Fe(3+) ion per subunit.</text>
</comment>
<comment type="subunit">
    <text evidence="1">Homodimer. Can also form a heterodimer with SodA (By similarity).</text>
</comment>
<comment type="similarity">
    <text evidence="3">Belongs to the iron/manganese superoxide dismutase family.</text>
</comment>
<name>SODM2_STAAC</name>
<protein>
    <recommendedName>
        <fullName>Superoxide dismutase [Mn/Fe] 2</fullName>
        <ecNumber evidence="2">1.15.1.1</ecNumber>
    </recommendedName>
</protein>
<sequence length="199" mass="23041">MAFKLPNLPYAYDALEPYIDQRTMEFHHDKHHNTYVTKLNATVEGTELEHQSLADMIANLDKVPEAMRMSVRNNGGGHFNHSLFWEILSPNSEEKGGVIDDIKAQWGTLDEFKNEFANKATTLFGSGWTWLVVNDGKLEIVTTPNQDNPLTEGKTPILLFDVWEHAYYLKYQNKRPDYMTAFWNIVNWKKVDELYQAAK</sequence>
<dbReference type="EC" id="1.15.1.1" evidence="2"/>
<dbReference type="EMBL" id="CP000046">
    <property type="protein sequence ID" value="AAW38761.1"/>
    <property type="molecule type" value="Genomic_DNA"/>
</dbReference>
<dbReference type="RefSeq" id="WP_000874681.1">
    <property type="nucleotide sequence ID" value="NZ_JBGOFO010000001.1"/>
</dbReference>
<dbReference type="SMR" id="Q5HJN5"/>
<dbReference type="KEGG" id="sac:SACOL0118"/>
<dbReference type="HOGENOM" id="CLU_031625_0_0_9"/>
<dbReference type="Proteomes" id="UP000000530">
    <property type="component" value="Chromosome"/>
</dbReference>
<dbReference type="GO" id="GO:0005737">
    <property type="term" value="C:cytoplasm"/>
    <property type="evidence" value="ECO:0007669"/>
    <property type="project" value="TreeGrafter"/>
</dbReference>
<dbReference type="GO" id="GO:0046872">
    <property type="term" value="F:metal ion binding"/>
    <property type="evidence" value="ECO:0007669"/>
    <property type="project" value="UniProtKB-KW"/>
</dbReference>
<dbReference type="GO" id="GO:0004784">
    <property type="term" value="F:superoxide dismutase activity"/>
    <property type="evidence" value="ECO:0007669"/>
    <property type="project" value="UniProtKB-EC"/>
</dbReference>
<dbReference type="FunFam" id="1.10.287.990:FF:000001">
    <property type="entry name" value="Superoxide dismutase"/>
    <property type="match status" value="1"/>
</dbReference>
<dbReference type="FunFam" id="3.55.40.20:FF:000001">
    <property type="entry name" value="Superoxide dismutase"/>
    <property type="match status" value="1"/>
</dbReference>
<dbReference type="Gene3D" id="1.10.287.990">
    <property type="entry name" value="Fe,Mn superoxide dismutase (SOD) domain"/>
    <property type="match status" value="1"/>
</dbReference>
<dbReference type="Gene3D" id="3.55.40.20">
    <property type="entry name" value="Iron/manganese superoxide dismutase, C-terminal domain"/>
    <property type="match status" value="1"/>
</dbReference>
<dbReference type="InterPro" id="IPR001189">
    <property type="entry name" value="Mn/Fe_SOD"/>
</dbReference>
<dbReference type="InterPro" id="IPR019833">
    <property type="entry name" value="Mn/Fe_SOD_BS"/>
</dbReference>
<dbReference type="InterPro" id="IPR019832">
    <property type="entry name" value="Mn/Fe_SOD_C"/>
</dbReference>
<dbReference type="InterPro" id="IPR019831">
    <property type="entry name" value="Mn/Fe_SOD_N"/>
</dbReference>
<dbReference type="InterPro" id="IPR036324">
    <property type="entry name" value="Mn/Fe_SOD_N_sf"/>
</dbReference>
<dbReference type="InterPro" id="IPR036314">
    <property type="entry name" value="SOD_C_sf"/>
</dbReference>
<dbReference type="PANTHER" id="PTHR43595">
    <property type="entry name" value="37S RIBOSOMAL PROTEIN S26, MITOCHONDRIAL"/>
    <property type="match status" value="1"/>
</dbReference>
<dbReference type="PANTHER" id="PTHR43595:SF2">
    <property type="entry name" value="SMALL RIBOSOMAL SUBUNIT PROTEIN MS42"/>
    <property type="match status" value="1"/>
</dbReference>
<dbReference type="Pfam" id="PF02777">
    <property type="entry name" value="Sod_Fe_C"/>
    <property type="match status" value="1"/>
</dbReference>
<dbReference type="Pfam" id="PF00081">
    <property type="entry name" value="Sod_Fe_N"/>
    <property type="match status" value="1"/>
</dbReference>
<dbReference type="PIRSF" id="PIRSF000349">
    <property type="entry name" value="SODismutase"/>
    <property type="match status" value="1"/>
</dbReference>
<dbReference type="PRINTS" id="PR01703">
    <property type="entry name" value="MNSODISMTASE"/>
</dbReference>
<dbReference type="SUPFAM" id="SSF54719">
    <property type="entry name" value="Fe,Mn superoxide dismutase (SOD), C-terminal domain"/>
    <property type="match status" value="1"/>
</dbReference>
<dbReference type="SUPFAM" id="SSF46609">
    <property type="entry name" value="Fe,Mn superoxide dismutase (SOD), N-terminal domain"/>
    <property type="match status" value="1"/>
</dbReference>
<dbReference type="PROSITE" id="PS00088">
    <property type="entry name" value="SOD_MN"/>
    <property type="match status" value="1"/>
</dbReference>